<proteinExistence type="inferred from homology"/>
<feature type="chain" id="PRO_1000120756" description="Small ribosomal subunit protein bS6">
    <location>
        <begin position="1"/>
        <end position="111"/>
    </location>
</feature>
<gene>
    <name evidence="1" type="primary">rpsF</name>
    <name type="ordered locus">FTM_0891</name>
</gene>
<keyword id="KW-0687">Ribonucleoprotein</keyword>
<keyword id="KW-0689">Ribosomal protein</keyword>
<keyword id="KW-0694">RNA-binding</keyword>
<keyword id="KW-0699">rRNA-binding</keyword>
<sequence>MKHYEVVLMIHPDQSDQLDAMLGKYRGIIEEKGGKIHRFEDWGRRQLAYPIEKLHKAHYVLFNIECPTESLEKLQESLRYNDAILRRLVIATKEAITEPSVMMESNEKEVI</sequence>
<evidence type="ECO:0000255" key="1">
    <source>
        <dbReference type="HAMAP-Rule" id="MF_00360"/>
    </source>
</evidence>
<evidence type="ECO:0000305" key="2"/>
<comment type="function">
    <text evidence="1">Binds together with bS18 to 16S ribosomal RNA.</text>
</comment>
<comment type="similarity">
    <text evidence="1">Belongs to the bacterial ribosomal protein bS6 family.</text>
</comment>
<accession>B2SGH0</accession>
<dbReference type="EMBL" id="CP000915">
    <property type="protein sequence ID" value="ACD30829.1"/>
    <property type="molecule type" value="Genomic_DNA"/>
</dbReference>
<dbReference type="SMR" id="B2SGH0"/>
<dbReference type="KEGG" id="ftm:FTM_0891"/>
<dbReference type="HOGENOM" id="CLU_113441_6_1_6"/>
<dbReference type="GO" id="GO:0022627">
    <property type="term" value="C:cytosolic small ribosomal subunit"/>
    <property type="evidence" value="ECO:0007669"/>
    <property type="project" value="TreeGrafter"/>
</dbReference>
<dbReference type="GO" id="GO:0070181">
    <property type="term" value="F:small ribosomal subunit rRNA binding"/>
    <property type="evidence" value="ECO:0007669"/>
    <property type="project" value="TreeGrafter"/>
</dbReference>
<dbReference type="GO" id="GO:0003735">
    <property type="term" value="F:structural constituent of ribosome"/>
    <property type="evidence" value="ECO:0007669"/>
    <property type="project" value="InterPro"/>
</dbReference>
<dbReference type="GO" id="GO:0006412">
    <property type="term" value="P:translation"/>
    <property type="evidence" value="ECO:0007669"/>
    <property type="project" value="UniProtKB-UniRule"/>
</dbReference>
<dbReference type="CDD" id="cd00473">
    <property type="entry name" value="bS6"/>
    <property type="match status" value="1"/>
</dbReference>
<dbReference type="Gene3D" id="3.30.70.60">
    <property type="match status" value="1"/>
</dbReference>
<dbReference type="HAMAP" id="MF_00360">
    <property type="entry name" value="Ribosomal_bS6"/>
    <property type="match status" value="1"/>
</dbReference>
<dbReference type="InterPro" id="IPR000529">
    <property type="entry name" value="Ribosomal_bS6"/>
</dbReference>
<dbReference type="InterPro" id="IPR035980">
    <property type="entry name" value="Ribosomal_bS6_sf"/>
</dbReference>
<dbReference type="InterPro" id="IPR020814">
    <property type="entry name" value="Ribosomal_S6_plastid/chlpt"/>
</dbReference>
<dbReference type="InterPro" id="IPR014717">
    <property type="entry name" value="Transl_elong_EF1B/ribsomal_bS6"/>
</dbReference>
<dbReference type="NCBIfam" id="TIGR00166">
    <property type="entry name" value="S6"/>
    <property type="match status" value="1"/>
</dbReference>
<dbReference type="PANTHER" id="PTHR21011">
    <property type="entry name" value="MITOCHONDRIAL 28S RIBOSOMAL PROTEIN S6"/>
    <property type="match status" value="1"/>
</dbReference>
<dbReference type="PANTHER" id="PTHR21011:SF1">
    <property type="entry name" value="SMALL RIBOSOMAL SUBUNIT PROTEIN BS6M"/>
    <property type="match status" value="1"/>
</dbReference>
<dbReference type="Pfam" id="PF01250">
    <property type="entry name" value="Ribosomal_S6"/>
    <property type="match status" value="1"/>
</dbReference>
<dbReference type="SUPFAM" id="SSF54995">
    <property type="entry name" value="Ribosomal protein S6"/>
    <property type="match status" value="1"/>
</dbReference>
<name>RS6_FRATM</name>
<protein>
    <recommendedName>
        <fullName evidence="1">Small ribosomal subunit protein bS6</fullName>
    </recommendedName>
    <alternativeName>
        <fullName evidence="2">30S ribosomal protein S6</fullName>
    </alternativeName>
</protein>
<organism>
    <name type="scientific">Francisella tularensis subsp. mediasiatica (strain FSC147)</name>
    <dbReference type="NCBI Taxonomy" id="441952"/>
    <lineage>
        <taxon>Bacteria</taxon>
        <taxon>Pseudomonadati</taxon>
        <taxon>Pseudomonadota</taxon>
        <taxon>Gammaproteobacteria</taxon>
        <taxon>Thiotrichales</taxon>
        <taxon>Francisellaceae</taxon>
        <taxon>Francisella</taxon>
    </lineage>
</organism>
<reference key="1">
    <citation type="journal article" date="2009" name="PLoS Pathog.">
        <title>Molecular evolutionary consequences of niche restriction in Francisella tularensis, a facultative intracellular pathogen.</title>
        <authorList>
            <person name="Larsson P."/>
            <person name="Elfsmark D."/>
            <person name="Svensson K."/>
            <person name="Wikstroem P."/>
            <person name="Forsman M."/>
            <person name="Brettin T."/>
            <person name="Keim P."/>
            <person name="Johansson A."/>
        </authorList>
    </citation>
    <scope>NUCLEOTIDE SEQUENCE [LARGE SCALE GENOMIC DNA]</scope>
    <source>
        <strain>FSC147</strain>
    </source>
</reference>